<name>SSPI_HALH5</name>
<proteinExistence type="inferred from homology"/>
<dbReference type="EMBL" id="BA000004">
    <property type="protein sequence ID" value="BAB06832.1"/>
    <property type="molecule type" value="Genomic_DNA"/>
</dbReference>
<dbReference type="PIR" id="A84039">
    <property type="entry name" value="A84039"/>
</dbReference>
<dbReference type="RefSeq" id="WP_010899257.1">
    <property type="nucleotide sequence ID" value="NC_002570.2"/>
</dbReference>
<dbReference type="SMR" id="Q9K893"/>
<dbReference type="STRING" id="272558.gene:10729025"/>
<dbReference type="GeneID" id="87598639"/>
<dbReference type="KEGG" id="bha:BH3113"/>
<dbReference type="eggNOG" id="ENOG5032YQ7">
    <property type="taxonomic scope" value="Bacteria"/>
</dbReference>
<dbReference type="HOGENOM" id="CLU_188877_0_0_9"/>
<dbReference type="OrthoDB" id="2453696at2"/>
<dbReference type="Proteomes" id="UP000001258">
    <property type="component" value="Chromosome"/>
</dbReference>
<dbReference type="GO" id="GO:0030436">
    <property type="term" value="P:asexual sporulation"/>
    <property type="evidence" value="ECO:0007669"/>
    <property type="project" value="UniProtKB-UniRule"/>
</dbReference>
<dbReference type="GO" id="GO:0030435">
    <property type="term" value="P:sporulation resulting in formation of a cellular spore"/>
    <property type="evidence" value="ECO:0007669"/>
    <property type="project" value="UniProtKB-KW"/>
</dbReference>
<dbReference type="HAMAP" id="MF_00669">
    <property type="entry name" value="SspI"/>
    <property type="match status" value="1"/>
</dbReference>
<dbReference type="InterPro" id="IPR017525">
    <property type="entry name" value="SspI"/>
</dbReference>
<dbReference type="NCBIfam" id="TIGR03092">
    <property type="entry name" value="SASP_sspI"/>
    <property type="match status" value="1"/>
</dbReference>
<dbReference type="Pfam" id="PF14098">
    <property type="entry name" value="SSPI"/>
    <property type="match status" value="1"/>
</dbReference>
<protein>
    <recommendedName>
        <fullName evidence="1">Small, acid-soluble spore protein I</fullName>
        <shortName evidence="1">SASP I</shortName>
    </recommendedName>
</protein>
<keyword id="KW-1185">Reference proteome</keyword>
<keyword id="KW-0749">Sporulation</keyword>
<reference key="1">
    <citation type="journal article" date="2000" name="Nucleic Acids Res.">
        <title>Complete genome sequence of the alkaliphilic bacterium Bacillus halodurans and genomic sequence comparison with Bacillus subtilis.</title>
        <authorList>
            <person name="Takami H."/>
            <person name="Nakasone K."/>
            <person name="Takaki Y."/>
            <person name="Maeno G."/>
            <person name="Sasaki R."/>
            <person name="Masui N."/>
            <person name="Fuji F."/>
            <person name="Hirama C."/>
            <person name="Nakamura Y."/>
            <person name="Ogasawara N."/>
            <person name="Kuhara S."/>
            <person name="Horikoshi K."/>
        </authorList>
    </citation>
    <scope>NUCLEOTIDE SEQUENCE [LARGE SCALE GENOMIC DNA]</scope>
    <source>
        <strain>ATCC BAA-125 / DSM 18197 / FERM 7344 / JCM 9153 / C-125</strain>
    </source>
</reference>
<organism>
    <name type="scientific">Halalkalibacterium halodurans (strain ATCC BAA-125 / DSM 18197 / FERM 7344 / JCM 9153 / C-125)</name>
    <name type="common">Bacillus halodurans</name>
    <dbReference type="NCBI Taxonomy" id="272558"/>
    <lineage>
        <taxon>Bacteria</taxon>
        <taxon>Bacillati</taxon>
        <taxon>Bacillota</taxon>
        <taxon>Bacilli</taxon>
        <taxon>Bacillales</taxon>
        <taxon>Bacillaceae</taxon>
        <taxon>Halalkalibacterium (ex Joshi et al. 2022)</taxon>
    </lineage>
</organism>
<accession>Q9K893</accession>
<comment type="subcellular location">
    <subcellularLocation>
        <location evidence="1">Spore core</location>
    </subcellularLocation>
</comment>
<comment type="induction">
    <text evidence="1">Expressed only in the forespore compartment of sporulating cells.</text>
</comment>
<comment type="similarity">
    <text evidence="1">Belongs to the SspI family.</text>
</comment>
<feature type="chain" id="PRO_0000218331" description="Small, acid-soluble spore protein I">
    <location>
        <begin position="1"/>
        <end position="68"/>
    </location>
</feature>
<sequence>MNFNLRQAIMANIQGSNEQEVEATIVDAIQSGEEKMLPGLGVLFEVYWKNCNEQQKDQLCEQISQGLQ</sequence>
<gene>
    <name evidence="1" type="primary">sspI</name>
    <name type="ordered locus">BH3113</name>
</gene>
<evidence type="ECO:0000255" key="1">
    <source>
        <dbReference type="HAMAP-Rule" id="MF_00669"/>
    </source>
</evidence>